<reference key="1">
    <citation type="journal article" date="2009" name="PLoS Genet.">
        <title>Organised genome dynamics in the Escherichia coli species results in highly diverse adaptive paths.</title>
        <authorList>
            <person name="Touchon M."/>
            <person name="Hoede C."/>
            <person name="Tenaillon O."/>
            <person name="Barbe V."/>
            <person name="Baeriswyl S."/>
            <person name="Bidet P."/>
            <person name="Bingen E."/>
            <person name="Bonacorsi S."/>
            <person name="Bouchier C."/>
            <person name="Bouvet O."/>
            <person name="Calteau A."/>
            <person name="Chiapello H."/>
            <person name="Clermont O."/>
            <person name="Cruveiller S."/>
            <person name="Danchin A."/>
            <person name="Diard M."/>
            <person name="Dossat C."/>
            <person name="Karoui M.E."/>
            <person name="Frapy E."/>
            <person name="Garry L."/>
            <person name="Ghigo J.M."/>
            <person name="Gilles A.M."/>
            <person name="Johnson J."/>
            <person name="Le Bouguenec C."/>
            <person name="Lescat M."/>
            <person name="Mangenot S."/>
            <person name="Martinez-Jehanne V."/>
            <person name="Matic I."/>
            <person name="Nassif X."/>
            <person name="Oztas S."/>
            <person name="Petit M.A."/>
            <person name="Pichon C."/>
            <person name="Rouy Z."/>
            <person name="Ruf C.S."/>
            <person name="Schneider D."/>
            <person name="Tourret J."/>
            <person name="Vacherie B."/>
            <person name="Vallenet D."/>
            <person name="Medigue C."/>
            <person name="Rocha E.P.C."/>
            <person name="Denamur E."/>
        </authorList>
    </citation>
    <scope>NUCLEOTIDE SEQUENCE [LARGE SCALE GENOMIC DNA]</scope>
    <source>
        <strain>55989 / EAEC</strain>
    </source>
</reference>
<sequence length="711" mass="77102">MLNPIVRKFQYGQHTVTLETGMMARQATAAVMVSMDDTAVFVTVVGQKKAKPGQDFFPLTVNYQERTYAAGRIPGSFFRREGRPSEGETLIARLIDRPIRPLFPEGFVNEVQVIATVVSVNPQVNPDIVAMIGASAALSLSGIPFNGPIGAARVGYINDQYVLNPTQDELKESKLDLVVAGTEAAVLMVESEAELLSEDQMLGAVVFGHEQQQVVIQNINELVKEAGKPRWDWQPEPVNEALNARVAALAEARLSDAYRITDKQERYAQVDVIKSETIATLLAEDETLDENELGEILHAIEKNVVRSRVLAGEPRIDGREKDMIRGLDVRTGVLPRTHGSALFTRGETQALVTATLGTARDAQVLDELMGERTDTFLFHYNFPPYSVGETGMVGSPKRREIGHGRLAKRGVLAVMPDMDKFPYTVRVVSEITESNGSSSMASVCGASLALMDAGVPIKAAVAGIAMGLVKEGDNYVVLSDILGDEDHLGDMDFKVAGSRDGISALQMDIKIEGITKEIMQVALNQAKGARLHILGVMEQAINAPRGDISEFAPRIHTIKINPDKIKDVIGKGGSVIRALTEETGTTIEIEDDGTVKIAATDGEKAKHAIRRIEEITAEIEVGRVYTGKVTRIVDFGAFVAIGGGKEGLVHISQIADKRVEKVTDYLQMGQEVPVKVLEVDRQGRIRLSIKEATEQSQPAAAPEAPAAEQGE</sequence>
<keyword id="KW-0963">Cytoplasm</keyword>
<keyword id="KW-0460">Magnesium</keyword>
<keyword id="KW-0479">Metal-binding</keyword>
<keyword id="KW-0548">Nucleotidyltransferase</keyword>
<keyword id="KW-1185">Reference proteome</keyword>
<keyword id="KW-0694">RNA-binding</keyword>
<keyword id="KW-0808">Transferase</keyword>
<evidence type="ECO:0000255" key="1">
    <source>
        <dbReference type="HAMAP-Rule" id="MF_01595"/>
    </source>
</evidence>
<evidence type="ECO:0000256" key="2">
    <source>
        <dbReference type="SAM" id="MobiDB-lite"/>
    </source>
</evidence>
<evidence type="ECO:0000305" key="3"/>
<dbReference type="EC" id="2.7.7.8" evidence="1"/>
<dbReference type="EMBL" id="CU928145">
    <property type="protein sequence ID" value="CAU99791.1"/>
    <property type="status" value="ALT_INIT"/>
    <property type="molecule type" value="Genomic_DNA"/>
</dbReference>
<dbReference type="RefSeq" id="WP_001298740.1">
    <property type="nucleotide sequence ID" value="NC_011748.1"/>
</dbReference>
<dbReference type="SMR" id="B7LH99"/>
<dbReference type="GeneID" id="93778819"/>
<dbReference type="KEGG" id="eck:EC55989_3584"/>
<dbReference type="HOGENOM" id="CLU_004217_2_2_6"/>
<dbReference type="Proteomes" id="UP000000746">
    <property type="component" value="Chromosome"/>
</dbReference>
<dbReference type="GO" id="GO:0005829">
    <property type="term" value="C:cytosol"/>
    <property type="evidence" value="ECO:0007669"/>
    <property type="project" value="TreeGrafter"/>
</dbReference>
<dbReference type="GO" id="GO:0000175">
    <property type="term" value="F:3'-5'-RNA exonuclease activity"/>
    <property type="evidence" value="ECO:0007669"/>
    <property type="project" value="TreeGrafter"/>
</dbReference>
<dbReference type="GO" id="GO:0000287">
    <property type="term" value="F:magnesium ion binding"/>
    <property type="evidence" value="ECO:0007669"/>
    <property type="project" value="UniProtKB-UniRule"/>
</dbReference>
<dbReference type="GO" id="GO:0004654">
    <property type="term" value="F:polyribonucleotide nucleotidyltransferase activity"/>
    <property type="evidence" value="ECO:0007669"/>
    <property type="project" value="UniProtKB-UniRule"/>
</dbReference>
<dbReference type="GO" id="GO:0003723">
    <property type="term" value="F:RNA binding"/>
    <property type="evidence" value="ECO:0007669"/>
    <property type="project" value="UniProtKB-UniRule"/>
</dbReference>
<dbReference type="GO" id="GO:0006402">
    <property type="term" value="P:mRNA catabolic process"/>
    <property type="evidence" value="ECO:0007669"/>
    <property type="project" value="UniProtKB-UniRule"/>
</dbReference>
<dbReference type="GO" id="GO:0006396">
    <property type="term" value="P:RNA processing"/>
    <property type="evidence" value="ECO:0007669"/>
    <property type="project" value="InterPro"/>
</dbReference>
<dbReference type="CDD" id="cd02393">
    <property type="entry name" value="KH-I_PNPase"/>
    <property type="match status" value="1"/>
</dbReference>
<dbReference type="CDD" id="cd11363">
    <property type="entry name" value="RNase_PH_PNPase_1"/>
    <property type="match status" value="1"/>
</dbReference>
<dbReference type="CDD" id="cd11364">
    <property type="entry name" value="RNase_PH_PNPase_2"/>
    <property type="match status" value="1"/>
</dbReference>
<dbReference type="CDD" id="cd04472">
    <property type="entry name" value="S1_PNPase"/>
    <property type="match status" value="1"/>
</dbReference>
<dbReference type="FunFam" id="2.40.50.140:FF:000023">
    <property type="entry name" value="Polyribonucleotide nucleotidyltransferase"/>
    <property type="match status" value="1"/>
</dbReference>
<dbReference type="FunFam" id="3.30.1370.10:FF:000001">
    <property type="entry name" value="Polyribonucleotide nucleotidyltransferase"/>
    <property type="match status" value="1"/>
</dbReference>
<dbReference type="FunFam" id="3.30.230.70:FF:000001">
    <property type="entry name" value="Polyribonucleotide nucleotidyltransferase"/>
    <property type="match status" value="1"/>
</dbReference>
<dbReference type="FunFam" id="3.30.230.70:FF:000002">
    <property type="entry name" value="Polyribonucleotide nucleotidyltransferase"/>
    <property type="match status" value="1"/>
</dbReference>
<dbReference type="Gene3D" id="3.30.230.70">
    <property type="entry name" value="GHMP Kinase, N-terminal domain"/>
    <property type="match status" value="2"/>
</dbReference>
<dbReference type="Gene3D" id="3.30.1370.10">
    <property type="entry name" value="K Homology domain, type 1"/>
    <property type="match status" value="1"/>
</dbReference>
<dbReference type="Gene3D" id="2.40.50.140">
    <property type="entry name" value="Nucleic acid-binding proteins"/>
    <property type="match status" value="1"/>
</dbReference>
<dbReference type="HAMAP" id="MF_01595">
    <property type="entry name" value="PNPase"/>
    <property type="match status" value="1"/>
</dbReference>
<dbReference type="InterPro" id="IPR001247">
    <property type="entry name" value="ExoRNase_PH_dom1"/>
</dbReference>
<dbReference type="InterPro" id="IPR015847">
    <property type="entry name" value="ExoRNase_PH_dom2"/>
</dbReference>
<dbReference type="InterPro" id="IPR036345">
    <property type="entry name" value="ExoRNase_PH_dom2_sf"/>
</dbReference>
<dbReference type="InterPro" id="IPR004087">
    <property type="entry name" value="KH_dom"/>
</dbReference>
<dbReference type="InterPro" id="IPR004088">
    <property type="entry name" value="KH_dom_type_1"/>
</dbReference>
<dbReference type="InterPro" id="IPR036612">
    <property type="entry name" value="KH_dom_type_1_sf"/>
</dbReference>
<dbReference type="InterPro" id="IPR012340">
    <property type="entry name" value="NA-bd_OB-fold"/>
</dbReference>
<dbReference type="InterPro" id="IPR012162">
    <property type="entry name" value="PNPase"/>
</dbReference>
<dbReference type="InterPro" id="IPR027408">
    <property type="entry name" value="PNPase/RNase_PH_dom_sf"/>
</dbReference>
<dbReference type="InterPro" id="IPR015848">
    <property type="entry name" value="PNPase_PH_RNA-bd_bac/org-type"/>
</dbReference>
<dbReference type="InterPro" id="IPR036456">
    <property type="entry name" value="PNPase_PH_RNA-bd_sf"/>
</dbReference>
<dbReference type="InterPro" id="IPR020568">
    <property type="entry name" value="Ribosomal_Su5_D2-typ_SF"/>
</dbReference>
<dbReference type="InterPro" id="IPR003029">
    <property type="entry name" value="S1_domain"/>
</dbReference>
<dbReference type="NCBIfam" id="TIGR03591">
    <property type="entry name" value="polynuc_phos"/>
    <property type="match status" value="1"/>
</dbReference>
<dbReference type="NCBIfam" id="NF008805">
    <property type="entry name" value="PRK11824.1"/>
    <property type="match status" value="1"/>
</dbReference>
<dbReference type="PANTHER" id="PTHR11252">
    <property type="entry name" value="POLYRIBONUCLEOTIDE NUCLEOTIDYLTRANSFERASE"/>
    <property type="match status" value="1"/>
</dbReference>
<dbReference type="PANTHER" id="PTHR11252:SF0">
    <property type="entry name" value="POLYRIBONUCLEOTIDE NUCLEOTIDYLTRANSFERASE 1, MITOCHONDRIAL"/>
    <property type="match status" value="1"/>
</dbReference>
<dbReference type="Pfam" id="PF00013">
    <property type="entry name" value="KH_1"/>
    <property type="match status" value="1"/>
</dbReference>
<dbReference type="Pfam" id="PF03726">
    <property type="entry name" value="PNPase"/>
    <property type="match status" value="1"/>
</dbReference>
<dbReference type="Pfam" id="PF01138">
    <property type="entry name" value="RNase_PH"/>
    <property type="match status" value="2"/>
</dbReference>
<dbReference type="Pfam" id="PF03725">
    <property type="entry name" value="RNase_PH_C"/>
    <property type="match status" value="2"/>
</dbReference>
<dbReference type="Pfam" id="PF00575">
    <property type="entry name" value="S1"/>
    <property type="match status" value="1"/>
</dbReference>
<dbReference type="PIRSF" id="PIRSF005499">
    <property type="entry name" value="PNPase"/>
    <property type="match status" value="1"/>
</dbReference>
<dbReference type="SMART" id="SM00322">
    <property type="entry name" value="KH"/>
    <property type="match status" value="1"/>
</dbReference>
<dbReference type="SMART" id="SM00316">
    <property type="entry name" value="S1"/>
    <property type="match status" value="1"/>
</dbReference>
<dbReference type="SUPFAM" id="SSF54791">
    <property type="entry name" value="Eukaryotic type KH-domain (KH-domain type I)"/>
    <property type="match status" value="1"/>
</dbReference>
<dbReference type="SUPFAM" id="SSF50249">
    <property type="entry name" value="Nucleic acid-binding proteins"/>
    <property type="match status" value="1"/>
</dbReference>
<dbReference type="SUPFAM" id="SSF46915">
    <property type="entry name" value="Polynucleotide phosphorylase/guanosine pentaphosphate synthase (PNPase/GPSI), domain 3"/>
    <property type="match status" value="1"/>
</dbReference>
<dbReference type="SUPFAM" id="SSF55666">
    <property type="entry name" value="Ribonuclease PH domain 2-like"/>
    <property type="match status" value="2"/>
</dbReference>
<dbReference type="SUPFAM" id="SSF54211">
    <property type="entry name" value="Ribosomal protein S5 domain 2-like"/>
    <property type="match status" value="2"/>
</dbReference>
<dbReference type="PROSITE" id="PS50084">
    <property type="entry name" value="KH_TYPE_1"/>
    <property type="match status" value="1"/>
</dbReference>
<dbReference type="PROSITE" id="PS50126">
    <property type="entry name" value="S1"/>
    <property type="match status" value="1"/>
</dbReference>
<feature type="chain" id="PRO_0000381887" description="Polyribonucleotide nucleotidyltransferase">
    <location>
        <begin position="1"/>
        <end position="711"/>
    </location>
</feature>
<feature type="domain" description="KH" evidence="1">
    <location>
        <begin position="553"/>
        <end position="612"/>
    </location>
</feature>
<feature type="domain" description="S1 motif" evidence="1">
    <location>
        <begin position="622"/>
        <end position="690"/>
    </location>
</feature>
<feature type="region of interest" description="Disordered" evidence="2">
    <location>
        <begin position="689"/>
        <end position="711"/>
    </location>
</feature>
<feature type="compositionally biased region" description="Low complexity" evidence="2">
    <location>
        <begin position="694"/>
        <end position="711"/>
    </location>
</feature>
<feature type="binding site" evidence="1">
    <location>
        <position position="486"/>
    </location>
    <ligand>
        <name>Mg(2+)</name>
        <dbReference type="ChEBI" id="CHEBI:18420"/>
    </ligand>
</feature>
<feature type="binding site" evidence="1">
    <location>
        <position position="492"/>
    </location>
    <ligand>
        <name>Mg(2+)</name>
        <dbReference type="ChEBI" id="CHEBI:18420"/>
    </ligand>
</feature>
<organism>
    <name type="scientific">Escherichia coli (strain 55989 / EAEC)</name>
    <dbReference type="NCBI Taxonomy" id="585055"/>
    <lineage>
        <taxon>Bacteria</taxon>
        <taxon>Pseudomonadati</taxon>
        <taxon>Pseudomonadota</taxon>
        <taxon>Gammaproteobacteria</taxon>
        <taxon>Enterobacterales</taxon>
        <taxon>Enterobacteriaceae</taxon>
        <taxon>Escherichia</taxon>
    </lineage>
</organism>
<name>PNP_ECO55</name>
<gene>
    <name evidence="1" type="primary">pnp</name>
    <name type="ordered locus">EC55989_3584</name>
</gene>
<proteinExistence type="inferred from homology"/>
<protein>
    <recommendedName>
        <fullName evidence="1">Polyribonucleotide nucleotidyltransferase</fullName>
        <ecNumber evidence="1">2.7.7.8</ecNumber>
    </recommendedName>
    <alternativeName>
        <fullName evidence="1">Polynucleotide phosphorylase</fullName>
        <shortName evidence="1">PNPase</shortName>
    </alternativeName>
</protein>
<accession>B7LH99</accession>
<comment type="function">
    <text evidence="1">Involved in mRNA degradation. Catalyzes the phosphorolysis of single-stranded polyribonucleotides processively in the 3'- to 5'-direction.</text>
</comment>
<comment type="catalytic activity">
    <reaction evidence="1">
        <text>RNA(n+1) + phosphate = RNA(n) + a ribonucleoside 5'-diphosphate</text>
        <dbReference type="Rhea" id="RHEA:22096"/>
        <dbReference type="Rhea" id="RHEA-COMP:14527"/>
        <dbReference type="Rhea" id="RHEA-COMP:17342"/>
        <dbReference type="ChEBI" id="CHEBI:43474"/>
        <dbReference type="ChEBI" id="CHEBI:57930"/>
        <dbReference type="ChEBI" id="CHEBI:140395"/>
        <dbReference type="EC" id="2.7.7.8"/>
    </reaction>
</comment>
<comment type="cofactor">
    <cofactor evidence="1">
        <name>Mg(2+)</name>
        <dbReference type="ChEBI" id="CHEBI:18420"/>
    </cofactor>
</comment>
<comment type="subunit">
    <text evidence="1">Component of the RNA degradosome, which is a multiprotein complex involved in RNA processing and mRNA degradation.</text>
</comment>
<comment type="subcellular location">
    <subcellularLocation>
        <location evidence="1">Cytoplasm</location>
    </subcellularLocation>
</comment>
<comment type="similarity">
    <text evidence="1">Belongs to the polyribonucleotide nucleotidyltransferase family.</text>
</comment>
<comment type="sequence caution" evidence="3">
    <conflict type="erroneous initiation">
        <sequence resource="EMBL-CDS" id="CAU99791"/>
    </conflict>
</comment>